<accession>A0RU64</accession>
<protein>
    <recommendedName>
        <fullName evidence="1">Glutamyl-tRNA(Gln) amidotransferase subunit A</fullName>
        <shortName evidence="1">Glu-ADT subunit A</shortName>
        <ecNumber evidence="1">6.3.5.7</ecNumber>
    </recommendedName>
</protein>
<sequence length="479" mass="51214">MLPESLVEYVREVGSGGTTCEEFTAGAIERTKKQGLDAYITLNEKALDEARRIDSRIKKGEKVGRCLGAPIAVKDNICVRGMRTTCASKMLEGYESPYDATVVTRLLAEDAIITGKTNMDEFAMGLTTEFSAYGPSRNPWNKECTPGGSSGGSAAAVGGLECIASLGSDTGGSVRNPASFCGMVGFKPTYGLVSRYGLVSYANSIEQIGPITRTVEDAAFMMDVISGADPNDATTIECKGGFLDGIDAGIKGKKVGLITEMAGEGIDPRVAEATRDAMAALEDAGARCGKVSLDMVKYSVAAYYTITATEAASNLARYDNTMYGYDMPIESYEFHSYISKARRKFGPEVTRRMILGGFVSSSGHGGRYYHRALKVRGLLAREAEEALAEYDLLLSPTVPILPFKLGEKMGDPVGLFLVDYNTVTANLTGKPAASVPYTVCDGLPVGMQLMGRPSGDAEVLQAAYSLQERSRMPEAPPWQ</sequence>
<proteinExistence type="inferred from homology"/>
<comment type="function">
    <text evidence="1">Allows the formation of correctly charged Gln-tRNA(Gln) through the transamidation of misacylated Glu-tRNA(Gln) in organisms which lack glutaminyl-tRNA synthetase. The reaction takes place in the presence of glutamine and ATP through an activated gamma-phospho-Glu-tRNA(Gln).</text>
</comment>
<comment type="catalytic activity">
    <reaction evidence="1">
        <text>L-glutamyl-tRNA(Gln) + L-glutamine + ATP + H2O = L-glutaminyl-tRNA(Gln) + L-glutamate + ADP + phosphate + H(+)</text>
        <dbReference type="Rhea" id="RHEA:17521"/>
        <dbReference type="Rhea" id="RHEA-COMP:9681"/>
        <dbReference type="Rhea" id="RHEA-COMP:9684"/>
        <dbReference type="ChEBI" id="CHEBI:15377"/>
        <dbReference type="ChEBI" id="CHEBI:15378"/>
        <dbReference type="ChEBI" id="CHEBI:29985"/>
        <dbReference type="ChEBI" id="CHEBI:30616"/>
        <dbReference type="ChEBI" id="CHEBI:43474"/>
        <dbReference type="ChEBI" id="CHEBI:58359"/>
        <dbReference type="ChEBI" id="CHEBI:78520"/>
        <dbReference type="ChEBI" id="CHEBI:78521"/>
        <dbReference type="ChEBI" id="CHEBI:456216"/>
        <dbReference type="EC" id="6.3.5.7"/>
    </reaction>
</comment>
<comment type="subunit">
    <text evidence="1">Heterotrimer of A, B and C subunits.</text>
</comment>
<comment type="similarity">
    <text evidence="1">Belongs to the amidase family. GatA subfamily.</text>
</comment>
<organism>
    <name type="scientific">Cenarchaeum symbiosum (strain A)</name>
    <dbReference type="NCBI Taxonomy" id="414004"/>
    <lineage>
        <taxon>Archaea</taxon>
        <taxon>Nitrososphaerota</taxon>
        <taxon>Candidatus Cenarchaeales</taxon>
        <taxon>Candidatus Cenarchaeaceae</taxon>
        <taxon>Candidatus Cenarchaeum</taxon>
    </lineage>
</organism>
<evidence type="ECO:0000255" key="1">
    <source>
        <dbReference type="HAMAP-Rule" id="MF_00120"/>
    </source>
</evidence>
<dbReference type="EC" id="6.3.5.7" evidence="1"/>
<dbReference type="EMBL" id="DP000238">
    <property type="protein sequence ID" value="ABK76881.1"/>
    <property type="molecule type" value="Genomic_DNA"/>
</dbReference>
<dbReference type="SMR" id="A0RU64"/>
<dbReference type="STRING" id="414004.CENSYa_0239"/>
<dbReference type="EnsemblBacteria" id="ABK76881">
    <property type="protein sequence ID" value="ABK76881"/>
    <property type="gene ID" value="CENSYa_0239"/>
</dbReference>
<dbReference type="KEGG" id="csy:CENSYa_0239"/>
<dbReference type="PATRIC" id="fig|414004.10.peg.209"/>
<dbReference type="HOGENOM" id="CLU_009600_0_3_2"/>
<dbReference type="Proteomes" id="UP000000758">
    <property type="component" value="Chromosome"/>
</dbReference>
<dbReference type="GO" id="GO:0030956">
    <property type="term" value="C:glutamyl-tRNA(Gln) amidotransferase complex"/>
    <property type="evidence" value="ECO:0007669"/>
    <property type="project" value="InterPro"/>
</dbReference>
<dbReference type="GO" id="GO:0005524">
    <property type="term" value="F:ATP binding"/>
    <property type="evidence" value="ECO:0007669"/>
    <property type="project" value="UniProtKB-KW"/>
</dbReference>
<dbReference type="GO" id="GO:0050567">
    <property type="term" value="F:glutaminyl-tRNA synthase (glutamine-hydrolyzing) activity"/>
    <property type="evidence" value="ECO:0007669"/>
    <property type="project" value="UniProtKB-UniRule"/>
</dbReference>
<dbReference type="GO" id="GO:0006412">
    <property type="term" value="P:translation"/>
    <property type="evidence" value="ECO:0007669"/>
    <property type="project" value="UniProtKB-UniRule"/>
</dbReference>
<dbReference type="Gene3D" id="3.90.1300.10">
    <property type="entry name" value="Amidase signature (AS) domain"/>
    <property type="match status" value="1"/>
</dbReference>
<dbReference type="HAMAP" id="MF_00120">
    <property type="entry name" value="GatA"/>
    <property type="match status" value="1"/>
</dbReference>
<dbReference type="InterPro" id="IPR000120">
    <property type="entry name" value="Amidase"/>
</dbReference>
<dbReference type="InterPro" id="IPR020556">
    <property type="entry name" value="Amidase_CS"/>
</dbReference>
<dbReference type="InterPro" id="IPR023631">
    <property type="entry name" value="Amidase_dom"/>
</dbReference>
<dbReference type="InterPro" id="IPR036928">
    <property type="entry name" value="AS_sf"/>
</dbReference>
<dbReference type="InterPro" id="IPR004412">
    <property type="entry name" value="GatA"/>
</dbReference>
<dbReference type="NCBIfam" id="TIGR00132">
    <property type="entry name" value="gatA"/>
    <property type="match status" value="1"/>
</dbReference>
<dbReference type="PANTHER" id="PTHR11895:SF7">
    <property type="entry name" value="GLUTAMYL-TRNA(GLN) AMIDOTRANSFERASE SUBUNIT A, MITOCHONDRIAL"/>
    <property type="match status" value="1"/>
</dbReference>
<dbReference type="PANTHER" id="PTHR11895">
    <property type="entry name" value="TRANSAMIDASE"/>
    <property type="match status" value="1"/>
</dbReference>
<dbReference type="Pfam" id="PF01425">
    <property type="entry name" value="Amidase"/>
    <property type="match status" value="1"/>
</dbReference>
<dbReference type="SUPFAM" id="SSF75304">
    <property type="entry name" value="Amidase signature (AS) enzymes"/>
    <property type="match status" value="1"/>
</dbReference>
<dbReference type="PROSITE" id="PS00571">
    <property type="entry name" value="AMIDASES"/>
    <property type="match status" value="1"/>
</dbReference>
<gene>
    <name evidence="1" type="primary">gatA</name>
    <name type="ordered locus">CENSYa_0239</name>
</gene>
<feature type="chain" id="PRO_1000122472" description="Glutamyl-tRNA(Gln) amidotransferase subunit A">
    <location>
        <begin position="1"/>
        <end position="479"/>
    </location>
</feature>
<feature type="active site" description="Charge relay system" evidence="1">
    <location>
        <position position="74"/>
    </location>
</feature>
<feature type="active site" description="Charge relay system" evidence="1">
    <location>
        <position position="149"/>
    </location>
</feature>
<feature type="active site" description="Acyl-ester intermediate" evidence="1">
    <location>
        <position position="173"/>
    </location>
</feature>
<name>GATA_CENSY</name>
<keyword id="KW-0067">ATP-binding</keyword>
<keyword id="KW-0436">Ligase</keyword>
<keyword id="KW-0547">Nucleotide-binding</keyword>
<keyword id="KW-0648">Protein biosynthesis</keyword>
<keyword id="KW-1185">Reference proteome</keyword>
<reference key="1">
    <citation type="journal article" date="2006" name="Proc. Natl. Acad. Sci. U.S.A.">
        <title>Genomic analysis of the uncultivated marine crenarchaeote Cenarchaeum symbiosum.</title>
        <authorList>
            <person name="Hallam S.J."/>
            <person name="Konstantinidis K.T."/>
            <person name="Putnam N."/>
            <person name="Schleper C."/>
            <person name="Watanabe Y."/>
            <person name="Sugahara J."/>
            <person name="Preston C."/>
            <person name="de la Torre J."/>
            <person name="Richardson P.M."/>
            <person name="DeLong E.F."/>
        </authorList>
    </citation>
    <scope>NUCLEOTIDE SEQUENCE [LARGE SCALE GENOMIC DNA]</scope>
    <source>
        <strain>A</strain>
    </source>
</reference>